<feature type="chain" id="PRO_1000118081" description="Phosphopantetheine adenylyltransferase">
    <location>
        <begin position="1"/>
        <end position="159"/>
    </location>
</feature>
<feature type="binding site" evidence="1">
    <location>
        <begin position="10"/>
        <end position="11"/>
    </location>
    <ligand>
        <name>ATP</name>
        <dbReference type="ChEBI" id="CHEBI:30616"/>
    </ligand>
</feature>
<feature type="binding site" evidence="1">
    <location>
        <position position="10"/>
    </location>
    <ligand>
        <name>substrate</name>
    </ligand>
</feature>
<feature type="binding site" evidence="1">
    <location>
        <position position="18"/>
    </location>
    <ligand>
        <name>ATP</name>
        <dbReference type="ChEBI" id="CHEBI:30616"/>
    </ligand>
</feature>
<feature type="binding site" evidence="1">
    <location>
        <position position="42"/>
    </location>
    <ligand>
        <name>substrate</name>
    </ligand>
</feature>
<feature type="binding site" evidence="1">
    <location>
        <position position="74"/>
    </location>
    <ligand>
        <name>substrate</name>
    </ligand>
</feature>
<feature type="binding site" evidence="1">
    <location>
        <position position="88"/>
    </location>
    <ligand>
        <name>substrate</name>
    </ligand>
</feature>
<feature type="binding site" evidence="1">
    <location>
        <begin position="89"/>
        <end position="91"/>
    </location>
    <ligand>
        <name>ATP</name>
        <dbReference type="ChEBI" id="CHEBI:30616"/>
    </ligand>
</feature>
<feature type="binding site" evidence="1">
    <location>
        <position position="99"/>
    </location>
    <ligand>
        <name>ATP</name>
        <dbReference type="ChEBI" id="CHEBI:30616"/>
    </ligand>
</feature>
<feature type="binding site" evidence="1">
    <location>
        <begin position="124"/>
        <end position="130"/>
    </location>
    <ligand>
        <name>ATP</name>
        <dbReference type="ChEBI" id="CHEBI:30616"/>
    </ligand>
</feature>
<feature type="site" description="Transition state stabilizer" evidence="1">
    <location>
        <position position="18"/>
    </location>
</feature>
<dbReference type="EC" id="2.7.7.3" evidence="1"/>
<dbReference type="EMBL" id="CU928158">
    <property type="protein sequence ID" value="CAQ91359.1"/>
    <property type="molecule type" value="Genomic_DNA"/>
</dbReference>
<dbReference type="RefSeq" id="WP_001171862.1">
    <property type="nucleotide sequence ID" value="NC_011740.1"/>
</dbReference>
<dbReference type="SMR" id="B7LVJ5"/>
<dbReference type="GeneID" id="75059517"/>
<dbReference type="KEGG" id="efe:EFER_3925"/>
<dbReference type="HOGENOM" id="CLU_100149_0_1_6"/>
<dbReference type="OrthoDB" id="9806661at2"/>
<dbReference type="UniPathway" id="UPA00241">
    <property type="reaction ID" value="UER00355"/>
</dbReference>
<dbReference type="Proteomes" id="UP000000745">
    <property type="component" value="Chromosome"/>
</dbReference>
<dbReference type="GO" id="GO:0005737">
    <property type="term" value="C:cytoplasm"/>
    <property type="evidence" value="ECO:0007669"/>
    <property type="project" value="UniProtKB-SubCell"/>
</dbReference>
<dbReference type="GO" id="GO:0005524">
    <property type="term" value="F:ATP binding"/>
    <property type="evidence" value="ECO:0007669"/>
    <property type="project" value="UniProtKB-KW"/>
</dbReference>
<dbReference type="GO" id="GO:0004595">
    <property type="term" value="F:pantetheine-phosphate adenylyltransferase activity"/>
    <property type="evidence" value="ECO:0007669"/>
    <property type="project" value="UniProtKB-UniRule"/>
</dbReference>
<dbReference type="GO" id="GO:0015937">
    <property type="term" value="P:coenzyme A biosynthetic process"/>
    <property type="evidence" value="ECO:0007669"/>
    <property type="project" value="UniProtKB-UniRule"/>
</dbReference>
<dbReference type="CDD" id="cd02163">
    <property type="entry name" value="PPAT"/>
    <property type="match status" value="1"/>
</dbReference>
<dbReference type="FunFam" id="3.40.50.620:FF:000012">
    <property type="entry name" value="Phosphopantetheine adenylyltransferase"/>
    <property type="match status" value="1"/>
</dbReference>
<dbReference type="Gene3D" id="3.40.50.620">
    <property type="entry name" value="HUPs"/>
    <property type="match status" value="1"/>
</dbReference>
<dbReference type="HAMAP" id="MF_00151">
    <property type="entry name" value="PPAT_bact"/>
    <property type="match status" value="1"/>
</dbReference>
<dbReference type="InterPro" id="IPR004821">
    <property type="entry name" value="Cyt_trans-like"/>
</dbReference>
<dbReference type="InterPro" id="IPR001980">
    <property type="entry name" value="PPAT"/>
</dbReference>
<dbReference type="InterPro" id="IPR014729">
    <property type="entry name" value="Rossmann-like_a/b/a_fold"/>
</dbReference>
<dbReference type="NCBIfam" id="TIGR01510">
    <property type="entry name" value="coaD_prev_kdtB"/>
    <property type="match status" value="1"/>
</dbReference>
<dbReference type="NCBIfam" id="TIGR00125">
    <property type="entry name" value="cyt_tran_rel"/>
    <property type="match status" value="1"/>
</dbReference>
<dbReference type="PANTHER" id="PTHR21342">
    <property type="entry name" value="PHOSPHOPANTETHEINE ADENYLYLTRANSFERASE"/>
    <property type="match status" value="1"/>
</dbReference>
<dbReference type="PANTHER" id="PTHR21342:SF1">
    <property type="entry name" value="PHOSPHOPANTETHEINE ADENYLYLTRANSFERASE"/>
    <property type="match status" value="1"/>
</dbReference>
<dbReference type="Pfam" id="PF01467">
    <property type="entry name" value="CTP_transf_like"/>
    <property type="match status" value="1"/>
</dbReference>
<dbReference type="PRINTS" id="PR01020">
    <property type="entry name" value="LPSBIOSNTHSS"/>
</dbReference>
<dbReference type="SUPFAM" id="SSF52374">
    <property type="entry name" value="Nucleotidylyl transferase"/>
    <property type="match status" value="1"/>
</dbReference>
<comment type="function">
    <text evidence="1">Reversibly transfers an adenylyl group from ATP to 4'-phosphopantetheine, yielding dephospho-CoA (dPCoA) and pyrophosphate.</text>
</comment>
<comment type="catalytic activity">
    <reaction evidence="1">
        <text>(R)-4'-phosphopantetheine + ATP + H(+) = 3'-dephospho-CoA + diphosphate</text>
        <dbReference type="Rhea" id="RHEA:19801"/>
        <dbReference type="ChEBI" id="CHEBI:15378"/>
        <dbReference type="ChEBI" id="CHEBI:30616"/>
        <dbReference type="ChEBI" id="CHEBI:33019"/>
        <dbReference type="ChEBI" id="CHEBI:57328"/>
        <dbReference type="ChEBI" id="CHEBI:61723"/>
        <dbReference type="EC" id="2.7.7.3"/>
    </reaction>
</comment>
<comment type="cofactor">
    <cofactor evidence="1">
        <name>Mg(2+)</name>
        <dbReference type="ChEBI" id="CHEBI:18420"/>
    </cofactor>
</comment>
<comment type="pathway">
    <text evidence="1">Cofactor biosynthesis; coenzyme A biosynthesis; CoA from (R)-pantothenate: step 4/5.</text>
</comment>
<comment type="subunit">
    <text evidence="1">Homohexamer.</text>
</comment>
<comment type="subcellular location">
    <subcellularLocation>
        <location evidence="1">Cytoplasm</location>
    </subcellularLocation>
</comment>
<comment type="similarity">
    <text evidence="1">Belongs to the bacterial CoaD family.</text>
</comment>
<reference key="1">
    <citation type="journal article" date="2009" name="PLoS Genet.">
        <title>Organised genome dynamics in the Escherichia coli species results in highly diverse adaptive paths.</title>
        <authorList>
            <person name="Touchon M."/>
            <person name="Hoede C."/>
            <person name="Tenaillon O."/>
            <person name="Barbe V."/>
            <person name="Baeriswyl S."/>
            <person name="Bidet P."/>
            <person name="Bingen E."/>
            <person name="Bonacorsi S."/>
            <person name="Bouchier C."/>
            <person name="Bouvet O."/>
            <person name="Calteau A."/>
            <person name="Chiapello H."/>
            <person name="Clermont O."/>
            <person name="Cruveiller S."/>
            <person name="Danchin A."/>
            <person name="Diard M."/>
            <person name="Dossat C."/>
            <person name="Karoui M.E."/>
            <person name="Frapy E."/>
            <person name="Garry L."/>
            <person name="Ghigo J.M."/>
            <person name="Gilles A.M."/>
            <person name="Johnson J."/>
            <person name="Le Bouguenec C."/>
            <person name="Lescat M."/>
            <person name="Mangenot S."/>
            <person name="Martinez-Jehanne V."/>
            <person name="Matic I."/>
            <person name="Nassif X."/>
            <person name="Oztas S."/>
            <person name="Petit M.A."/>
            <person name="Pichon C."/>
            <person name="Rouy Z."/>
            <person name="Ruf C.S."/>
            <person name="Schneider D."/>
            <person name="Tourret J."/>
            <person name="Vacherie B."/>
            <person name="Vallenet D."/>
            <person name="Medigue C."/>
            <person name="Rocha E.P.C."/>
            <person name="Denamur E."/>
        </authorList>
    </citation>
    <scope>NUCLEOTIDE SEQUENCE [LARGE SCALE GENOMIC DNA]</scope>
    <source>
        <strain>ATCC 35469 / DSM 13698 / BCRC 15582 / CCUG 18766 / IAM 14443 / JCM 21226 / LMG 7866 / NBRC 102419 / NCTC 12128 / CDC 0568-73</strain>
    </source>
</reference>
<accession>B7LVJ5</accession>
<sequence>MQKRAIYPGTFDPITNGHIDIVTRATQMFDHVILAIAASPSKKPMFTLEERVALAQHATAHLGNVEVVGFSDLMANFARNQHATVLIRGLRAVADFEYEMQLAHMNRHLMPELESVFLMPSKEWSFISSSLVKEVARHQGDVTHFLPENVHQALMAKLA</sequence>
<organism>
    <name type="scientific">Escherichia fergusonii (strain ATCC 35469 / DSM 13698 / CCUG 18766 / IAM 14443 / JCM 21226 / LMG 7866 / NBRC 102419 / NCTC 12128 / CDC 0568-73)</name>
    <dbReference type="NCBI Taxonomy" id="585054"/>
    <lineage>
        <taxon>Bacteria</taxon>
        <taxon>Pseudomonadati</taxon>
        <taxon>Pseudomonadota</taxon>
        <taxon>Gammaproteobacteria</taxon>
        <taxon>Enterobacterales</taxon>
        <taxon>Enterobacteriaceae</taxon>
        <taxon>Escherichia</taxon>
    </lineage>
</organism>
<gene>
    <name evidence="1" type="primary">coaD</name>
    <name type="ordered locus">EFER_3925</name>
</gene>
<name>COAD_ESCF3</name>
<keyword id="KW-0067">ATP-binding</keyword>
<keyword id="KW-0173">Coenzyme A biosynthesis</keyword>
<keyword id="KW-0963">Cytoplasm</keyword>
<keyword id="KW-0460">Magnesium</keyword>
<keyword id="KW-0547">Nucleotide-binding</keyword>
<keyword id="KW-0548">Nucleotidyltransferase</keyword>
<keyword id="KW-0808">Transferase</keyword>
<proteinExistence type="inferred from homology"/>
<protein>
    <recommendedName>
        <fullName evidence="1">Phosphopantetheine adenylyltransferase</fullName>
        <ecNumber evidence="1">2.7.7.3</ecNumber>
    </recommendedName>
    <alternativeName>
        <fullName evidence="1">Dephospho-CoA pyrophosphorylase</fullName>
    </alternativeName>
    <alternativeName>
        <fullName evidence="1">Pantetheine-phosphate adenylyltransferase</fullName>
        <shortName evidence="1">PPAT</shortName>
    </alternativeName>
</protein>
<evidence type="ECO:0000255" key="1">
    <source>
        <dbReference type="HAMAP-Rule" id="MF_00151"/>
    </source>
</evidence>